<keyword id="KW-0150">Chloroplast</keyword>
<keyword id="KW-0472">Membrane</keyword>
<keyword id="KW-0602">Photosynthesis</keyword>
<keyword id="KW-0603">Photosystem I</keyword>
<keyword id="KW-0934">Plastid</keyword>
<keyword id="KW-0793">Thylakoid</keyword>
<keyword id="KW-0812">Transmembrane</keyword>
<keyword id="KW-1133">Transmembrane helix</keyword>
<accession>P69395</accession>
<accession>O64006</accession>
<geneLocation type="chloroplast"/>
<sequence length="42" mass="4744">MQDLKTYLSTAPVLAISSFIFLAGLLIEINRFFPDALTFAFF</sequence>
<proteinExistence type="inferred from homology"/>
<organism>
    <name type="scientific">Picea rubens</name>
    <name type="common">Red spruce</name>
    <name type="synonym">Picea australis</name>
    <dbReference type="NCBI Taxonomy" id="3333"/>
    <lineage>
        <taxon>Eukaryota</taxon>
        <taxon>Viridiplantae</taxon>
        <taxon>Streptophyta</taxon>
        <taxon>Embryophyta</taxon>
        <taxon>Tracheophyta</taxon>
        <taxon>Spermatophyta</taxon>
        <taxon>Pinopsida</taxon>
        <taxon>Pinidae</taxon>
        <taxon>Conifers I</taxon>
        <taxon>Pinales</taxon>
        <taxon>Pinaceae</taxon>
        <taxon>Picea</taxon>
    </lineage>
</organism>
<evidence type="ECO:0000250" key="1"/>
<evidence type="ECO:0000255" key="2"/>
<evidence type="ECO:0000305" key="3"/>
<reference key="1">
    <citation type="journal article" date="1999" name="Theor. Appl. Genet.">
        <title>Species-specific nuclear and chloroplast single nucleotide polymorphisms to distinguish Picea glauca, P. mariana and P. rubens.</title>
        <authorList>
            <person name="Germano J."/>
            <person name="Klein A.S."/>
        </authorList>
        <dbReference type="AGRICOLA" id="IND22025547"/>
    </citation>
    <scope>NUCLEOTIDE SEQUENCE [GENOMIC DNA]</scope>
</reference>
<comment type="function">
    <text evidence="1">May help in the organization of the PsaE and PsaF subunits.</text>
</comment>
<comment type="subcellular location">
    <subcellularLocation>
        <location evidence="1">Plastid</location>
        <location evidence="1">Chloroplast thylakoid membrane</location>
        <topology evidence="1">Single-pass membrane protein</topology>
    </subcellularLocation>
</comment>
<comment type="similarity">
    <text evidence="3">Belongs to the PsaJ family.</text>
</comment>
<name>PSAJ_PICRU</name>
<feature type="chain" id="PRO_0000207809" description="Photosystem I reaction center subunit IX">
    <location>
        <begin position="1"/>
        <end position="42"/>
    </location>
</feature>
<feature type="transmembrane region" description="Helical" evidence="2">
    <location>
        <begin position="7"/>
        <end position="27"/>
    </location>
</feature>
<gene>
    <name type="primary">psaJ</name>
</gene>
<protein>
    <recommendedName>
        <fullName>Photosystem I reaction center subunit IX</fullName>
    </recommendedName>
    <alternativeName>
        <fullName>PSI-J</fullName>
    </alternativeName>
</protein>
<dbReference type="EMBL" id="AF061362">
    <property type="protein sequence ID" value="AAC35789.1"/>
    <property type="molecule type" value="Genomic_DNA"/>
</dbReference>
<dbReference type="EMBL" id="AF133927">
    <property type="protein sequence ID" value="AAD21626.1"/>
    <property type="molecule type" value="Genomic_DNA"/>
</dbReference>
<dbReference type="EMBL" id="AF133928">
    <property type="protein sequence ID" value="AAD21627.1"/>
    <property type="molecule type" value="Genomic_DNA"/>
</dbReference>
<dbReference type="EMBL" id="AF133929">
    <property type="protein sequence ID" value="AAD21628.1"/>
    <property type="molecule type" value="Genomic_DNA"/>
</dbReference>
<dbReference type="EMBL" id="AF133930">
    <property type="protein sequence ID" value="AAD21630.1"/>
    <property type="molecule type" value="Genomic_DNA"/>
</dbReference>
<dbReference type="SMR" id="P69395"/>
<dbReference type="GO" id="GO:0009535">
    <property type="term" value="C:chloroplast thylakoid membrane"/>
    <property type="evidence" value="ECO:0007669"/>
    <property type="project" value="UniProtKB-SubCell"/>
</dbReference>
<dbReference type="GO" id="GO:0009522">
    <property type="term" value="C:photosystem I"/>
    <property type="evidence" value="ECO:0007669"/>
    <property type="project" value="UniProtKB-KW"/>
</dbReference>
<dbReference type="GO" id="GO:0015979">
    <property type="term" value="P:photosynthesis"/>
    <property type="evidence" value="ECO:0007669"/>
    <property type="project" value="UniProtKB-UniRule"/>
</dbReference>
<dbReference type="Gene3D" id="1.20.5.510">
    <property type="entry name" value="Single helix bin"/>
    <property type="match status" value="1"/>
</dbReference>
<dbReference type="HAMAP" id="MF_00522">
    <property type="entry name" value="PSI_PsaJ"/>
    <property type="match status" value="1"/>
</dbReference>
<dbReference type="InterPro" id="IPR002615">
    <property type="entry name" value="PSI_PsaJ"/>
</dbReference>
<dbReference type="InterPro" id="IPR036062">
    <property type="entry name" value="PSI_PsaJ_sf"/>
</dbReference>
<dbReference type="PANTHER" id="PTHR36082">
    <property type="match status" value="1"/>
</dbReference>
<dbReference type="PANTHER" id="PTHR36082:SF2">
    <property type="entry name" value="PHOTOSYSTEM I REACTION CENTER SUBUNIT IX"/>
    <property type="match status" value="1"/>
</dbReference>
<dbReference type="Pfam" id="PF01701">
    <property type="entry name" value="PSI_PsaJ"/>
    <property type="match status" value="1"/>
</dbReference>
<dbReference type="SUPFAM" id="SSF81544">
    <property type="entry name" value="Subunit IX of photosystem I reaction centre, PsaJ"/>
    <property type="match status" value="1"/>
</dbReference>